<keyword id="KW-0324">Glycolysis</keyword>
<keyword id="KW-0456">Lyase</keyword>
<keyword id="KW-0704">Schiff base</keyword>
<comment type="catalytic activity">
    <reaction>
        <text>beta-D-fructose 1,6-bisphosphate = D-glyceraldehyde 3-phosphate + dihydroxyacetone phosphate</text>
        <dbReference type="Rhea" id="RHEA:14729"/>
        <dbReference type="ChEBI" id="CHEBI:32966"/>
        <dbReference type="ChEBI" id="CHEBI:57642"/>
        <dbReference type="ChEBI" id="CHEBI:59776"/>
        <dbReference type="EC" id="4.1.2.13"/>
    </reaction>
</comment>
<comment type="pathway">
    <text>Carbohydrate degradation; glycolysis; D-glyceraldehyde 3-phosphate and glycerone phosphate from D-glucose: step 4/4.</text>
</comment>
<comment type="similarity">
    <text evidence="2">Belongs to the class I fructose-bisphosphate aldolase family.</text>
</comment>
<proteinExistence type="evidence at transcript level"/>
<reference key="1">
    <citation type="submission" date="1996-10" db="EMBL/GenBank/DDBJ databases">
        <authorList>
            <person name="Fainzilber M."/>
            <person name="Kesteren R.E."/>
            <person name="Smit A.B."/>
        </authorList>
    </citation>
    <scope>NUCLEOTIDE SEQUENCE [MRNA]</scope>
</reference>
<accession>P91759</accession>
<protein>
    <recommendedName>
        <fullName>Fructose-bisphosphate aldolase</fullName>
        <ecNumber>4.1.2.13</ecNumber>
    </recommendedName>
</protein>
<dbReference type="EC" id="4.1.2.13"/>
<dbReference type="EMBL" id="U73114">
    <property type="protein sequence ID" value="AAC47398.1"/>
    <property type="molecule type" value="mRNA"/>
</dbReference>
<dbReference type="SMR" id="P91759"/>
<dbReference type="UniPathway" id="UPA00109">
    <property type="reaction ID" value="UER00183"/>
</dbReference>
<dbReference type="GO" id="GO:0004332">
    <property type="term" value="F:fructose-bisphosphate aldolase activity"/>
    <property type="evidence" value="ECO:0007669"/>
    <property type="project" value="UniProtKB-EC"/>
</dbReference>
<dbReference type="GO" id="GO:0006096">
    <property type="term" value="P:glycolytic process"/>
    <property type="evidence" value="ECO:0007669"/>
    <property type="project" value="UniProtKB-UniPathway"/>
</dbReference>
<dbReference type="Gene3D" id="3.20.20.70">
    <property type="entry name" value="Aldolase class I"/>
    <property type="match status" value="1"/>
</dbReference>
<dbReference type="InterPro" id="IPR029768">
    <property type="entry name" value="Aldolase_I_AS"/>
</dbReference>
<dbReference type="InterPro" id="IPR013785">
    <property type="entry name" value="Aldolase_TIM"/>
</dbReference>
<dbReference type="InterPro" id="IPR000741">
    <property type="entry name" value="FBA_I"/>
</dbReference>
<dbReference type="PANTHER" id="PTHR11627">
    <property type="entry name" value="FRUCTOSE-BISPHOSPHATE ALDOLASE"/>
    <property type="match status" value="1"/>
</dbReference>
<dbReference type="Pfam" id="PF00274">
    <property type="entry name" value="Glycolytic"/>
    <property type="match status" value="1"/>
</dbReference>
<dbReference type="SUPFAM" id="SSF51569">
    <property type="entry name" value="Aldolase"/>
    <property type="match status" value="1"/>
</dbReference>
<dbReference type="PROSITE" id="PS00158">
    <property type="entry name" value="ALDOLASE_CLASS_I"/>
    <property type="match status" value="1"/>
</dbReference>
<organism>
    <name type="scientific">Lymnaea stagnalis</name>
    <name type="common">Great pond snail</name>
    <name type="synonym">Helix stagnalis</name>
    <dbReference type="NCBI Taxonomy" id="6523"/>
    <lineage>
        <taxon>Eukaryota</taxon>
        <taxon>Metazoa</taxon>
        <taxon>Spiralia</taxon>
        <taxon>Lophotrochozoa</taxon>
        <taxon>Mollusca</taxon>
        <taxon>Gastropoda</taxon>
        <taxon>Heterobranchia</taxon>
        <taxon>Euthyneura</taxon>
        <taxon>Panpulmonata</taxon>
        <taxon>Hygrophila</taxon>
        <taxon>Lymnaeoidea</taxon>
        <taxon>Lymnaeidae</taxon>
        <taxon>Lymnaea</taxon>
    </lineage>
</organism>
<name>ALF_LYMST</name>
<feature type="chain" id="PRO_0000216932" description="Fructose-bisphosphate aldolase">
    <location>
        <begin position="1" status="less than"/>
        <end position="101" status="greater than"/>
    </location>
</feature>
<feature type="active site" description="Schiff-base intermediate with dihydroxyacetone-P" evidence="1">
    <location>
        <position position="11"/>
    </location>
</feature>
<feature type="non-terminal residue">
    <location>
        <position position="1"/>
    </location>
</feature>
<feature type="non-terminal residue">
    <location>
        <position position="101"/>
    </location>
</feature>
<evidence type="ECO:0000250" key="1"/>
<evidence type="ECO:0000305" key="2"/>
<sequence>HNMFLEGTLLKPNMVTAGQGCPKKYTPEDIARATVTALNRTVPAAVAGITFLSGGQSEEDATINLNAINQFPGRKPWPLTFSYGRALQASVLKAWGGKDEL</sequence>